<evidence type="ECO:0000255" key="1">
    <source>
        <dbReference type="HAMAP-Rule" id="MF_00503"/>
    </source>
</evidence>
<evidence type="ECO:0000305" key="2"/>
<keyword id="KW-1185">Reference proteome</keyword>
<keyword id="KW-0687">Ribonucleoprotein</keyword>
<keyword id="KW-0689">Ribosomal protein</keyword>
<keyword id="KW-0694">RNA-binding</keyword>
<keyword id="KW-0699">rRNA-binding</keyword>
<reference key="1">
    <citation type="journal article" date="2004" name="Proc. Natl. Acad. Sci. U.S.A.">
        <title>Structural flexibility in the Burkholderia mallei genome.</title>
        <authorList>
            <person name="Nierman W.C."/>
            <person name="DeShazer D."/>
            <person name="Kim H.S."/>
            <person name="Tettelin H."/>
            <person name="Nelson K.E."/>
            <person name="Feldblyum T.V."/>
            <person name="Ulrich R.L."/>
            <person name="Ronning C.M."/>
            <person name="Brinkac L.M."/>
            <person name="Daugherty S.C."/>
            <person name="Davidsen T.D."/>
            <person name="DeBoy R.T."/>
            <person name="Dimitrov G."/>
            <person name="Dodson R.J."/>
            <person name="Durkin A.S."/>
            <person name="Gwinn M.L."/>
            <person name="Haft D.H."/>
            <person name="Khouri H.M."/>
            <person name="Kolonay J.F."/>
            <person name="Madupu R."/>
            <person name="Mohammoud Y."/>
            <person name="Nelson W.C."/>
            <person name="Radune D."/>
            <person name="Romero C.M."/>
            <person name="Sarria S."/>
            <person name="Selengut J."/>
            <person name="Shamblin C."/>
            <person name="Sullivan S.A."/>
            <person name="White O."/>
            <person name="Yu Y."/>
            <person name="Zafar N."/>
            <person name="Zhou L."/>
            <person name="Fraser C.M."/>
        </authorList>
    </citation>
    <scope>NUCLEOTIDE SEQUENCE [LARGE SCALE GENOMIC DNA]</scope>
    <source>
        <strain>ATCC 23344</strain>
    </source>
</reference>
<gene>
    <name evidence="1" type="primary">rplI</name>
    <name type="ordered locus">BMA1401</name>
</gene>
<feature type="chain" id="PRO_0000236497" description="Large ribosomal subunit protein bL9">
    <location>
        <begin position="1"/>
        <end position="150"/>
    </location>
</feature>
<proteinExistence type="inferred from homology"/>
<sequence>MQIILLEKVANLGNLGDIVKVKDGYARNFLIPNRKARRATKDAIAEFEVRRAELEKVAAEKLAAAQAVGEKLNGQTFEITQKSGVDGRLFGSVTNGDVAELLKKAGYEIEKAQVRMPEGPLKMIGEHGVQVALHTDVVVDVTVNVIGDHA</sequence>
<comment type="function">
    <text evidence="1">Binds to the 23S rRNA.</text>
</comment>
<comment type="similarity">
    <text evidence="1">Belongs to the bacterial ribosomal protein bL9 family.</text>
</comment>
<protein>
    <recommendedName>
        <fullName evidence="1">Large ribosomal subunit protein bL9</fullName>
    </recommendedName>
    <alternativeName>
        <fullName evidence="2">50S ribosomal protein L9</fullName>
    </alternativeName>
</protein>
<organism>
    <name type="scientific">Burkholderia mallei (strain ATCC 23344)</name>
    <dbReference type="NCBI Taxonomy" id="243160"/>
    <lineage>
        <taxon>Bacteria</taxon>
        <taxon>Pseudomonadati</taxon>
        <taxon>Pseudomonadota</taxon>
        <taxon>Betaproteobacteria</taxon>
        <taxon>Burkholderiales</taxon>
        <taxon>Burkholderiaceae</taxon>
        <taxon>Burkholderia</taxon>
        <taxon>pseudomallei group</taxon>
    </lineage>
</organism>
<dbReference type="EMBL" id="CP000010">
    <property type="protein sequence ID" value="AAU47658.1"/>
    <property type="molecule type" value="Genomic_DNA"/>
</dbReference>
<dbReference type="RefSeq" id="WP_004191711.1">
    <property type="nucleotide sequence ID" value="NC_006348.1"/>
</dbReference>
<dbReference type="RefSeq" id="YP_103057.1">
    <property type="nucleotide sequence ID" value="NC_006348.1"/>
</dbReference>
<dbReference type="SMR" id="Q62JR2"/>
<dbReference type="GeneID" id="93060530"/>
<dbReference type="KEGG" id="bma:BMA1401"/>
<dbReference type="PATRIC" id="fig|243160.12.peg.1442"/>
<dbReference type="eggNOG" id="COG0359">
    <property type="taxonomic scope" value="Bacteria"/>
</dbReference>
<dbReference type="HOGENOM" id="CLU_078938_4_1_4"/>
<dbReference type="Proteomes" id="UP000006693">
    <property type="component" value="Chromosome 1"/>
</dbReference>
<dbReference type="GO" id="GO:1990904">
    <property type="term" value="C:ribonucleoprotein complex"/>
    <property type="evidence" value="ECO:0007669"/>
    <property type="project" value="UniProtKB-KW"/>
</dbReference>
<dbReference type="GO" id="GO:0005840">
    <property type="term" value="C:ribosome"/>
    <property type="evidence" value="ECO:0007669"/>
    <property type="project" value="UniProtKB-KW"/>
</dbReference>
<dbReference type="GO" id="GO:0019843">
    <property type="term" value="F:rRNA binding"/>
    <property type="evidence" value="ECO:0007669"/>
    <property type="project" value="UniProtKB-UniRule"/>
</dbReference>
<dbReference type="GO" id="GO:0003735">
    <property type="term" value="F:structural constituent of ribosome"/>
    <property type="evidence" value="ECO:0007669"/>
    <property type="project" value="InterPro"/>
</dbReference>
<dbReference type="GO" id="GO:0006412">
    <property type="term" value="P:translation"/>
    <property type="evidence" value="ECO:0007669"/>
    <property type="project" value="UniProtKB-UniRule"/>
</dbReference>
<dbReference type="Gene3D" id="3.10.430.100">
    <property type="entry name" value="Ribosomal protein L9, C-terminal domain"/>
    <property type="match status" value="1"/>
</dbReference>
<dbReference type="Gene3D" id="3.40.5.10">
    <property type="entry name" value="Ribosomal protein L9, N-terminal domain"/>
    <property type="match status" value="1"/>
</dbReference>
<dbReference type="HAMAP" id="MF_00503">
    <property type="entry name" value="Ribosomal_bL9"/>
    <property type="match status" value="1"/>
</dbReference>
<dbReference type="InterPro" id="IPR000244">
    <property type="entry name" value="Ribosomal_bL9"/>
</dbReference>
<dbReference type="InterPro" id="IPR009027">
    <property type="entry name" value="Ribosomal_bL9/RNase_H1_N"/>
</dbReference>
<dbReference type="InterPro" id="IPR020594">
    <property type="entry name" value="Ribosomal_bL9_bac/chp"/>
</dbReference>
<dbReference type="InterPro" id="IPR020069">
    <property type="entry name" value="Ribosomal_bL9_C"/>
</dbReference>
<dbReference type="InterPro" id="IPR036791">
    <property type="entry name" value="Ribosomal_bL9_C_sf"/>
</dbReference>
<dbReference type="InterPro" id="IPR020070">
    <property type="entry name" value="Ribosomal_bL9_N"/>
</dbReference>
<dbReference type="InterPro" id="IPR036935">
    <property type="entry name" value="Ribosomal_bL9_N_sf"/>
</dbReference>
<dbReference type="NCBIfam" id="TIGR00158">
    <property type="entry name" value="L9"/>
    <property type="match status" value="1"/>
</dbReference>
<dbReference type="PANTHER" id="PTHR21368">
    <property type="entry name" value="50S RIBOSOMAL PROTEIN L9"/>
    <property type="match status" value="1"/>
</dbReference>
<dbReference type="Pfam" id="PF03948">
    <property type="entry name" value="Ribosomal_L9_C"/>
    <property type="match status" value="1"/>
</dbReference>
<dbReference type="Pfam" id="PF01281">
    <property type="entry name" value="Ribosomal_L9_N"/>
    <property type="match status" value="1"/>
</dbReference>
<dbReference type="SUPFAM" id="SSF55658">
    <property type="entry name" value="L9 N-domain-like"/>
    <property type="match status" value="1"/>
</dbReference>
<dbReference type="SUPFAM" id="SSF55653">
    <property type="entry name" value="Ribosomal protein L9 C-domain"/>
    <property type="match status" value="1"/>
</dbReference>
<dbReference type="PROSITE" id="PS00651">
    <property type="entry name" value="RIBOSOMAL_L9"/>
    <property type="match status" value="1"/>
</dbReference>
<accession>Q62JR2</accession>
<name>RL9_BURMA</name>